<organism>
    <name type="scientific">Thermococcus kodakarensis (strain ATCC BAA-918 / JCM 12380 / KOD1)</name>
    <name type="common">Pyrococcus kodakaraensis (strain KOD1)</name>
    <dbReference type="NCBI Taxonomy" id="69014"/>
    <lineage>
        <taxon>Archaea</taxon>
        <taxon>Methanobacteriati</taxon>
        <taxon>Methanobacteriota</taxon>
        <taxon>Thermococci</taxon>
        <taxon>Thermococcales</taxon>
        <taxon>Thermococcaceae</taxon>
        <taxon>Thermococcus</taxon>
    </lineage>
</organism>
<comment type="subunit">
    <text evidence="2">Part of the 50S ribosomal subunit.</text>
</comment>
<comment type="similarity">
    <text evidence="1">Belongs to the eukaryotic ribosomal protein eL14 family.</text>
</comment>
<feature type="chain" id="PRO_0000132054" description="Large ribosomal subunit protein eL14">
    <location>
        <begin position="1"/>
        <end position="83"/>
    </location>
</feature>
<evidence type="ECO:0000255" key="1">
    <source>
        <dbReference type="HAMAP-Rule" id="MF_00721"/>
    </source>
</evidence>
<evidence type="ECO:0000269" key="2">
    <source>
    </source>
</evidence>
<evidence type="ECO:0000305" key="3"/>
<evidence type="ECO:0007744" key="4">
    <source>
        <dbReference type="PDB" id="6SKF"/>
    </source>
</evidence>
<evidence type="ECO:0007744" key="5">
    <source>
        <dbReference type="PDB" id="6SKG"/>
    </source>
</evidence>
<evidence type="ECO:0007744" key="6">
    <source>
        <dbReference type="PDB" id="6TH6"/>
    </source>
</evidence>
<proteinExistence type="evidence at protein level"/>
<name>RL14E_THEKO</name>
<accession>Q5JJE4</accession>
<sequence>MPAIEVGRIAVVIAGRRAGQKVVVADIIDKNFVLVTGAGLNKVKRRRMNVKHLEPLPERVNIQRGASDEEIKAALEGAGISLE</sequence>
<reference key="1">
    <citation type="journal article" date="2005" name="Genome Res.">
        <title>Complete genome sequence of the hyperthermophilic archaeon Thermococcus kodakaraensis KOD1 and comparison with Pyrococcus genomes.</title>
        <authorList>
            <person name="Fukui T."/>
            <person name="Atomi H."/>
            <person name="Kanai T."/>
            <person name="Matsumi R."/>
            <person name="Fujiwara S."/>
            <person name="Imanaka T."/>
        </authorList>
    </citation>
    <scope>NUCLEOTIDE SEQUENCE [LARGE SCALE GENOMIC DNA]</scope>
    <source>
        <strain>ATCC BAA-918 / JCM 12380 / KOD1</strain>
    </source>
</reference>
<reference evidence="4 5 6" key="2">
    <citation type="journal article" date="2020" name="Nature">
        <title>Dynamic RNA acetylation revealed by quantitative cross-evolutionary mapping.</title>
        <authorList>
            <person name="Sas-Chen A."/>
            <person name="Thomas J.M."/>
            <person name="Matzov D."/>
            <person name="Taoka M."/>
            <person name="Nance K.D."/>
            <person name="Nir R."/>
            <person name="Bryson K.M."/>
            <person name="Shachar R."/>
            <person name="Liman G.L.S."/>
            <person name="Burkhart B.W."/>
            <person name="Gamage S.T."/>
            <person name="Nobe Y."/>
            <person name="Briney C.A."/>
            <person name="Levy M.J."/>
            <person name="Fuchs R.T."/>
            <person name="Robb G.B."/>
            <person name="Hartmann J."/>
            <person name="Sharma S."/>
            <person name="Lin Q."/>
            <person name="Florens L."/>
            <person name="Washburn M.P."/>
            <person name="Isobe T."/>
            <person name="Santangelo T.J."/>
            <person name="Shalev-Benami M."/>
            <person name="Meier J.L."/>
            <person name="Schwartz S."/>
        </authorList>
    </citation>
    <scope>STRUCTURE BY ELECTRON MICROSCOPY (2.55 ANGSTROMS) IN 70S RIBOSOME</scope>
    <scope>SUBUNIT</scope>
    <source>
        <strain>ATCC BAA-918 / TS559</strain>
    </source>
</reference>
<protein>
    <recommendedName>
        <fullName evidence="1">Large ribosomal subunit protein eL14</fullName>
    </recommendedName>
    <alternativeName>
        <fullName evidence="3">50S ribosomal protein L14e</fullName>
    </alternativeName>
</protein>
<dbReference type="EMBL" id="AP006878">
    <property type="protein sequence ID" value="BAD85702.1"/>
    <property type="molecule type" value="Genomic_DNA"/>
</dbReference>
<dbReference type="RefSeq" id="WP_011250464.1">
    <property type="nucleotide sequence ID" value="NC_006624.1"/>
</dbReference>
<dbReference type="PDB" id="6SKF">
    <property type="method" value="EM"/>
    <property type="resolution" value="2.95 A"/>
    <property type="chains" value="BM/BN=1-83"/>
</dbReference>
<dbReference type="PDB" id="6SKG">
    <property type="method" value="EM"/>
    <property type="resolution" value="2.65 A"/>
    <property type="chains" value="BM/BN=1-83"/>
</dbReference>
<dbReference type="PDB" id="6TH6">
    <property type="method" value="EM"/>
    <property type="resolution" value="2.55 A"/>
    <property type="chains" value="BM/BN=1-83"/>
</dbReference>
<dbReference type="PDBsum" id="6SKF"/>
<dbReference type="PDBsum" id="6SKG"/>
<dbReference type="PDBsum" id="6TH6"/>
<dbReference type="EMDB" id="EMD-10223"/>
<dbReference type="EMDB" id="EMD-10224"/>
<dbReference type="EMDB" id="EMD-10503"/>
<dbReference type="SMR" id="Q5JJE4"/>
<dbReference type="FunCoup" id="Q5JJE4">
    <property type="interactions" value="114"/>
</dbReference>
<dbReference type="STRING" id="69014.TK1513"/>
<dbReference type="EnsemblBacteria" id="BAD85702">
    <property type="protein sequence ID" value="BAD85702"/>
    <property type="gene ID" value="TK1513"/>
</dbReference>
<dbReference type="GeneID" id="78448041"/>
<dbReference type="KEGG" id="tko:TK1513"/>
<dbReference type="PATRIC" id="fig|69014.16.peg.1473"/>
<dbReference type="eggNOG" id="arCOG04167">
    <property type="taxonomic scope" value="Archaea"/>
</dbReference>
<dbReference type="HOGENOM" id="CLU_183474_0_0_2"/>
<dbReference type="InParanoid" id="Q5JJE4"/>
<dbReference type="OrthoDB" id="63594at2157"/>
<dbReference type="PhylomeDB" id="Q5JJE4"/>
<dbReference type="Proteomes" id="UP000000536">
    <property type="component" value="Chromosome"/>
</dbReference>
<dbReference type="GO" id="GO:0022625">
    <property type="term" value="C:cytosolic large ribosomal subunit"/>
    <property type="evidence" value="ECO:0000318"/>
    <property type="project" value="GO_Central"/>
</dbReference>
<dbReference type="GO" id="GO:0003723">
    <property type="term" value="F:RNA binding"/>
    <property type="evidence" value="ECO:0000318"/>
    <property type="project" value="GO_Central"/>
</dbReference>
<dbReference type="GO" id="GO:0003735">
    <property type="term" value="F:structural constituent of ribosome"/>
    <property type="evidence" value="ECO:0000318"/>
    <property type="project" value="GO_Central"/>
</dbReference>
<dbReference type="GO" id="GO:0042273">
    <property type="term" value="P:ribosomal large subunit biogenesis"/>
    <property type="evidence" value="ECO:0000318"/>
    <property type="project" value="GO_Central"/>
</dbReference>
<dbReference type="GO" id="GO:0006412">
    <property type="term" value="P:translation"/>
    <property type="evidence" value="ECO:0007669"/>
    <property type="project" value="UniProtKB-UniRule"/>
</dbReference>
<dbReference type="CDD" id="cd06088">
    <property type="entry name" value="KOW_RPL14"/>
    <property type="match status" value="1"/>
</dbReference>
<dbReference type="FunFam" id="2.30.30.30:FF:000045">
    <property type="entry name" value="50S ribosomal protein L14e"/>
    <property type="match status" value="1"/>
</dbReference>
<dbReference type="Gene3D" id="2.30.30.30">
    <property type="match status" value="1"/>
</dbReference>
<dbReference type="HAMAP" id="MF_00721">
    <property type="entry name" value="Ribosomal_eL14"/>
    <property type="match status" value="1"/>
</dbReference>
<dbReference type="InterPro" id="IPR014722">
    <property type="entry name" value="Rib_uL2_dom2"/>
</dbReference>
<dbReference type="InterPro" id="IPR039660">
    <property type="entry name" value="Ribosomal_eL14"/>
</dbReference>
<dbReference type="InterPro" id="IPR023651">
    <property type="entry name" value="Ribosomal_eL14_arc"/>
</dbReference>
<dbReference type="InterPro" id="IPR041985">
    <property type="entry name" value="Ribosomal_eL14_KOW"/>
</dbReference>
<dbReference type="InterPro" id="IPR008991">
    <property type="entry name" value="Translation_prot_SH3-like_sf"/>
</dbReference>
<dbReference type="NCBIfam" id="NF003320">
    <property type="entry name" value="PRK04333.1"/>
    <property type="match status" value="1"/>
</dbReference>
<dbReference type="PANTHER" id="PTHR11127">
    <property type="entry name" value="60S RIBOSOMAL PROTEIN L14"/>
    <property type="match status" value="1"/>
</dbReference>
<dbReference type="PANTHER" id="PTHR11127:SF2">
    <property type="entry name" value="LARGE RIBOSOMAL SUBUNIT PROTEIN EL14"/>
    <property type="match status" value="1"/>
</dbReference>
<dbReference type="SUPFAM" id="SSF50104">
    <property type="entry name" value="Translation proteins SH3-like domain"/>
    <property type="match status" value="1"/>
</dbReference>
<gene>
    <name evidence="1" type="primary">rpl14e</name>
    <name type="ordered locus">TK1513</name>
</gene>
<keyword id="KW-0002">3D-structure</keyword>
<keyword id="KW-1185">Reference proteome</keyword>
<keyword id="KW-0687">Ribonucleoprotein</keyword>
<keyword id="KW-0689">Ribosomal protein</keyword>